<protein>
    <recommendedName>
        <fullName evidence="1">Protease HtpX</fullName>
        <ecNumber evidence="1">3.4.24.-</ecNumber>
    </recommendedName>
    <alternativeName>
        <fullName evidence="1">Heat shock protein HtpX</fullName>
    </alternativeName>
</protein>
<proteinExistence type="inferred from homology"/>
<comment type="cofactor">
    <cofactor evidence="1">
        <name>Zn(2+)</name>
        <dbReference type="ChEBI" id="CHEBI:29105"/>
    </cofactor>
    <text evidence="1">Binds 1 zinc ion per subunit.</text>
</comment>
<comment type="subcellular location">
    <subcellularLocation>
        <location evidence="1">Cell inner membrane</location>
        <topology evidence="1">Multi-pass membrane protein</topology>
    </subcellularLocation>
</comment>
<comment type="similarity">
    <text evidence="1">Belongs to the peptidase M48B family.</text>
</comment>
<organism>
    <name type="scientific">Salmonella schwarzengrund (strain CVM19633)</name>
    <dbReference type="NCBI Taxonomy" id="439843"/>
    <lineage>
        <taxon>Bacteria</taxon>
        <taxon>Pseudomonadati</taxon>
        <taxon>Pseudomonadota</taxon>
        <taxon>Gammaproteobacteria</taxon>
        <taxon>Enterobacterales</taxon>
        <taxon>Enterobacteriaceae</taxon>
        <taxon>Salmonella</taxon>
    </lineage>
</organism>
<reference key="1">
    <citation type="journal article" date="2011" name="J. Bacteriol.">
        <title>Comparative genomics of 28 Salmonella enterica isolates: evidence for CRISPR-mediated adaptive sublineage evolution.</title>
        <authorList>
            <person name="Fricke W.F."/>
            <person name="Mammel M.K."/>
            <person name="McDermott P.F."/>
            <person name="Tartera C."/>
            <person name="White D.G."/>
            <person name="Leclerc J.E."/>
            <person name="Ravel J."/>
            <person name="Cebula T.A."/>
        </authorList>
    </citation>
    <scope>NUCLEOTIDE SEQUENCE [LARGE SCALE GENOMIC DNA]</scope>
    <source>
        <strain>CVM19633</strain>
    </source>
</reference>
<feature type="chain" id="PRO_1000098846" description="Protease HtpX">
    <location>
        <begin position="1"/>
        <end position="293"/>
    </location>
</feature>
<feature type="transmembrane region" description="Helical" evidence="1">
    <location>
        <begin position="4"/>
        <end position="24"/>
    </location>
</feature>
<feature type="transmembrane region" description="Helical" evidence="1">
    <location>
        <begin position="34"/>
        <end position="54"/>
    </location>
</feature>
<feature type="transmembrane region" description="Helical" evidence="1">
    <location>
        <begin position="158"/>
        <end position="178"/>
    </location>
</feature>
<feature type="transmembrane region" description="Helical" evidence="1">
    <location>
        <begin position="193"/>
        <end position="213"/>
    </location>
</feature>
<feature type="active site" evidence="1">
    <location>
        <position position="140"/>
    </location>
</feature>
<feature type="binding site" evidence="1">
    <location>
        <position position="139"/>
    </location>
    <ligand>
        <name>Zn(2+)</name>
        <dbReference type="ChEBI" id="CHEBI:29105"/>
        <note>catalytic</note>
    </ligand>
</feature>
<feature type="binding site" evidence="1">
    <location>
        <position position="143"/>
    </location>
    <ligand>
        <name>Zn(2+)</name>
        <dbReference type="ChEBI" id="CHEBI:29105"/>
        <note>catalytic</note>
    </ligand>
</feature>
<feature type="binding site" evidence="1">
    <location>
        <position position="222"/>
    </location>
    <ligand>
        <name>Zn(2+)</name>
        <dbReference type="ChEBI" id="CHEBI:29105"/>
        <note>catalytic</note>
    </ligand>
</feature>
<sequence length="293" mass="31879">MMRIALFLLTNLAVMVVFGLVLSLTGIQSSSVQGLLIMALLFGFGGSFISLLMSKWMALKSVGGEVIEQPRNERERWLMNTVATQARQAGIAMPQVAIYHAPDINAFATGARRDASLVAVSTGLLQNMSPDEAEAVIAHEISHIANGDMVTMTLIQGVVNTFVIFISRIIAQIAAGFLGGNRDEGEGSNGNPLIYFAVATVLELVFGILASIITMWFSRYREFHADAGSAKLVGREKMIAALQRLKTSYEPQEATSMMAFCINGKSKSLSELFMTHPPLDKRIEALRSGEYLK</sequence>
<evidence type="ECO:0000255" key="1">
    <source>
        <dbReference type="HAMAP-Rule" id="MF_00188"/>
    </source>
</evidence>
<gene>
    <name evidence="1" type="primary">htpX</name>
    <name type="ordered locus">SeSA_A1987</name>
</gene>
<keyword id="KW-0997">Cell inner membrane</keyword>
<keyword id="KW-1003">Cell membrane</keyword>
<keyword id="KW-0378">Hydrolase</keyword>
<keyword id="KW-0472">Membrane</keyword>
<keyword id="KW-0479">Metal-binding</keyword>
<keyword id="KW-0482">Metalloprotease</keyword>
<keyword id="KW-0645">Protease</keyword>
<keyword id="KW-0812">Transmembrane</keyword>
<keyword id="KW-1133">Transmembrane helix</keyword>
<keyword id="KW-0862">Zinc</keyword>
<accession>B4TY12</accession>
<dbReference type="EC" id="3.4.24.-" evidence="1"/>
<dbReference type="EMBL" id="CP001127">
    <property type="protein sequence ID" value="ACF91365.1"/>
    <property type="molecule type" value="Genomic_DNA"/>
</dbReference>
<dbReference type="RefSeq" id="WP_000984498.1">
    <property type="nucleotide sequence ID" value="NC_011094.1"/>
</dbReference>
<dbReference type="SMR" id="B4TY12"/>
<dbReference type="MEROPS" id="M48.002"/>
<dbReference type="GeneID" id="66756319"/>
<dbReference type="KEGG" id="sew:SeSA_A1987"/>
<dbReference type="HOGENOM" id="CLU_042266_1_0_6"/>
<dbReference type="Proteomes" id="UP000001865">
    <property type="component" value="Chromosome"/>
</dbReference>
<dbReference type="GO" id="GO:0005886">
    <property type="term" value="C:plasma membrane"/>
    <property type="evidence" value="ECO:0007669"/>
    <property type="project" value="UniProtKB-SubCell"/>
</dbReference>
<dbReference type="GO" id="GO:0004222">
    <property type="term" value="F:metalloendopeptidase activity"/>
    <property type="evidence" value="ECO:0007669"/>
    <property type="project" value="UniProtKB-UniRule"/>
</dbReference>
<dbReference type="GO" id="GO:0008270">
    <property type="term" value="F:zinc ion binding"/>
    <property type="evidence" value="ECO:0007669"/>
    <property type="project" value="UniProtKB-UniRule"/>
</dbReference>
<dbReference type="GO" id="GO:0006508">
    <property type="term" value="P:proteolysis"/>
    <property type="evidence" value="ECO:0007669"/>
    <property type="project" value="UniProtKB-KW"/>
</dbReference>
<dbReference type="CDD" id="cd07335">
    <property type="entry name" value="M48B_HtpX_like"/>
    <property type="match status" value="1"/>
</dbReference>
<dbReference type="FunFam" id="3.30.2010.10:FF:000001">
    <property type="entry name" value="Protease HtpX"/>
    <property type="match status" value="1"/>
</dbReference>
<dbReference type="Gene3D" id="3.30.2010.10">
    <property type="entry name" value="Metalloproteases ('zincins'), catalytic domain"/>
    <property type="match status" value="1"/>
</dbReference>
<dbReference type="HAMAP" id="MF_00188">
    <property type="entry name" value="Pept_M48_protease_HtpX"/>
    <property type="match status" value="1"/>
</dbReference>
<dbReference type="InterPro" id="IPR050083">
    <property type="entry name" value="HtpX_protease"/>
</dbReference>
<dbReference type="InterPro" id="IPR022919">
    <property type="entry name" value="Pept_M48_protease_HtpX"/>
</dbReference>
<dbReference type="InterPro" id="IPR001915">
    <property type="entry name" value="Peptidase_M48"/>
</dbReference>
<dbReference type="NCBIfam" id="NF003965">
    <property type="entry name" value="PRK05457.1"/>
    <property type="match status" value="1"/>
</dbReference>
<dbReference type="PANTHER" id="PTHR43221">
    <property type="entry name" value="PROTEASE HTPX"/>
    <property type="match status" value="1"/>
</dbReference>
<dbReference type="PANTHER" id="PTHR43221:SF1">
    <property type="entry name" value="PROTEASE HTPX"/>
    <property type="match status" value="1"/>
</dbReference>
<dbReference type="Pfam" id="PF01435">
    <property type="entry name" value="Peptidase_M48"/>
    <property type="match status" value="1"/>
</dbReference>
<name>HTPX_SALSV</name>